<protein>
    <recommendedName>
        <fullName evidence="8">Alanine aminotransferase 1, mitochondrial</fullName>
        <shortName evidence="8">AtAlaAT1</shortName>
        <shortName evidence="9">AtAlaATc</shortName>
        <ecNumber evidence="6">2.6.1.2</ecNumber>
    </recommendedName>
    <alternativeName>
        <fullName evidence="7">Alanine-2-oxoglutarate aminotransferase 4</fullName>
        <ecNumber evidence="6">2.6.1.-</ecNumber>
    </alternativeName>
</protein>
<dbReference type="EC" id="2.6.1.2" evidence="6"/>
<dbReference type="EC" id="2.6.1.-" evidence="6"/>
<dbReference type="EMBL" id="AF275372">
    <property type="protein sequence ID" value="AAF82782.1"/>
    <property type="molecule type" value="mRNA"/>
</dbReference>
<dbReference type="EMBL" id="AC026479">
    <property type="protein sequence ID" value="AAF79891.1"/>
    <property type="molecule type" value="Genomic_DNA"/>
</dbReference>
<dbReference type="EMBL" id="CP002684">
    <property type="protein sequence ID" value="AEE29570.1"/>
    <property type="molecule type" value="Genomic_DNA"/>
</dbReference>
<dbReference type="EMBL" id="AY039970">
    <property type="protein sequence ID" value="AAK64147.2"/>
    <property type="molecule type" value="mRNA"/>
</dbReference>
<dbReference type="EMBL" id="AK221072">
    <property type="protein sequence ID" value="BAD94892.1"/>
    <property type="status" value="ALT_INIT"/>
    <property type="molecule type" value="mRNA"/>
</dbReference>
<dbReference type="PIR" id="D86309">
    <property type="entry name" value="D86309"/>
</dbReference>
<dbReference type="RefSeq" id="NP_173173.3">
    <property type="nucleotide sequence ID" value="NM_101591.6"/>
</dbReference>
<dbReference type="SMR" id="F4I7I0"/>
<dbReference type="BioGRID" id="23541">
    <property type="interactions" value="13"/>
</dbReference>
<dbReference type="FunCoup" id="F4I7I0">
    <property type="interactions" value="2816"/>
</dbReference>
<dbReference type="IntAct" id="F4I7I0">
    <property type="interactions" value="1"/>
</dbReference>
<dbReference type="STRING" id="3702.F4I7I0"/>
<dbReference type="iPTMnet" id="F4I7I0"/>
<dbReference type="MetOSite" id="F4I7I0"/>
<dbReference type="SwissPalm" id="F4I7I0"/>
<dbReference type="PaxDb" id="3702-AT1G17290.1"/>
<dbReference type="ProMEX" id="F4I7I0"/>
<dbReference type="ProteomicsDB" id="244994"/>
<dbReference type="DNASU" id="838301"/>
<dbReference type="EnsemblPlants" id="AT1G17290.1">
    <property type="protein sequence ID" value="AT1G17290.1"/>
    <property type="gene ID" value="AT1G17290"/>
</dbReference>
<dbReference type="GeneID" id="838301"/>
<dbReference type="Gramene" id="AT1G17290.1">
    <property type="protein sequence ID" value="AT1G17290.1"/>
    <property type="gene ID" value="AT1G17290"/>
</dbReference>
<dbReference type="KEGG" id="ath:AT1G17290"/>
<dbReference type="Araport" id="AT1G17290"/>
<dbReference type="TAIR" id="AT1G17290">
    <property type="gene designation" value="ALAAT1"/>
</dbReference>
<dbReference type="eggNOG" id="KOG0258">
    <property type="taxonomic scope" value="Eukaryota"/>
</dbReference>
<dbReference type="HOGENOM" id="CLU_014254_3_0_1"/>
<dbReference type="InParanoid" id="F4I7I0"/>
<dbReference type="OMA" id="VYLCNCA"/>
<dbReference type="BRENDA" id="2.6.1.2">
    <property type="organism ID" value="399"/>
</dbReference>
<dbReference type="UniPathway" id="UPA00322"/>
<dbReference type="UniPathway" id="UPA00528">
    <property type="reaction ID" value="UER00586"/>
</dbReference>
<dbReference type="CD-CODE" id="4299E36E">
    <property type="entry name" value="Nucleolus"/>
</dbReference>
<dbReference type="PRO" id="PR:F4I7I0"/>
<dbReference type="Proteomes" id="UP000006548">
    <property type="component" value="Chromosome 1"/>
</dbReference>
<dbReference type="ExpressionAtlas" id="F4I7I0">
    <property type="expression patterns" value="baseline and differential"/>
</dbReference>
<dbReference type="GO" id="GO:0005739">
    <property type="term" value="C:mitochondrion"/>
    <property type="evidence" value="ECO:0007005"/>
    <property type="project" value="TAIR"/>
</dbReference>
<dbReference type="GO" id="GO:0005634">
    <property type="term" value="C:nucleus"/>
    <property type="evidence" value="ECO:0007005"/>
    <property type="project" value="TAIR"/>
</dbReference>
<dbReference type="GO" id="GO:0005524">
    <property type="term" value="F:ATP binding"/>
    <property type="evidence" value="ECO:0007005"/>
    <property type="project" value="TAIR"/>
</dbReference>
<dbReference type="GO" id="GO:0004021">
    <property type="term" value="F:L-alanine:2-oxoglutarate aminotransferase activity"/>
    <property type="evidence" value="ECO:0000314"/>
    <property type="project" value="TAIR"/>
</dbReference>
<dbReference type="GO" id="GO:0030170">
    <property type="term" value="F:pyridoxal phosphate binding"/>
    <property type="evidence" value="ECO:0007669"/>
    <property type="project" value="InterPro"/>
</dbReference>
<dbReference type="GO" id="GO:0009058">
    <property type="term" value="P:biosynthetic process"/>
    <property type="evidence" value="ECO:0007669"/>
    <property type="project" value="InterPro"/>
</dbReference>
<dbReference type="GO" id="GO:0071456">
    <property type="term" value="P:cellular response to hypoxia"/>
    <property type="evidence" value="ECO:0007007"/>
    <property type="project" value="TAIR"/>
</dbReference>
<dbReference type="GO" id="GO:0019481">
    <property type="term" value="P:L-alanine catabolic process, by transamination"/>
    <property type="evidence" value="ECO:0000315"/>
    <property type="project" value="TAIR"/>
</dbReference>
<dbReference type="GO" id="GO:0046686">
    <property type="term" value="P:response to cadmium ion"/>
    <property type="evidence" value="ECO:0000270"/>
    <property type="project" value="TAIR"/>
</dbReference>
<dbReference type="GO" id="GO:0001666">
    <property type="term" value="P:response to hypoxia"/>
    <property type="evidence" value="ECO:0000270"/>
    <property type="project" value="TAIR"/>
</dbReference>
<dbReference type="CDD" id="cd00609">
    <property type="entry name" value="AAT_like"/>
    <property type="match status" value="1"/>
</dbReference>
<dbReference type="FunFam" id="3.90.1150.10:FF:000140">
    <property type="entry name" value="alanine aminotransferase 1"/>
    <property type="match status" value="1"/>
</dbReference>
<dbReference type="FunFam" id="1.10.287.1970:FF:000001">
    <property type="entry name" value="Alanine aminotransferase 2"/>
    <property type="match status" value="1"/>
</dbReference>
<dbReference type="FunFam" id="3.40.640.10:FF:000012">
    <property type="entry name" value="alanine aminotransferase 2"/>
    <property type="match status" value="1"/>
</dbReference>
<dbReference type="Gene3D" id="1.10.287.1970">
    <property type="match status" value="1"/>
</dbReference>
<dbReference type="Gene3D" id="3.90.1150.10">
    <property type="entry name" value="Aspartate Aminotransferase, domain 1"/>
    <property type="match status" value="1"/>
</dbReference>
<dbReference type="Gene3D" id="3.40.640.10">
    <property type="entry name" value="Type I PLP-dependent aspartate aminotransferase-like (Major domain)"/>
    <property type="match status" value="1"/>
</dbReference>
<dbReference type="InterPro" id="IPR045088">
    <property type="entry name" value="ALAT1/2-like"/>
</dbReference>
<dbReference type="InterPro" id="IPR004839">
    <property type="entry name" value="Aminotransferase_I/II_large"/>
</dbReference>
<dbReference type="InterPro" id="IPR015424">
    <property type="entry name" value="PyrdxlP-dep_Trfase"/>
</dbReference>
<dbReference type="InterPro" id="IPR015421">
    <property type="entry name" value="PyrdxlP-dep_Trfase_major"/>
</dbReference>
<dbReference type="InterPro" id="IPR015422">
    <property type="entry name" value="PyrdxlP-dep_Trfase_small"/>
</dbReference>
<dbReference type="PANTHER" id="PTHR11751">
    <property type="entry name" value="ALANINE AMINOTRANSFERASE"/>
    <property type="match status" value="1"/>
</dbReference>
<dbReference type="PANTHER" id="PTHR11751:SF29">
    <property type="entry name" value="ALANINE TRANSAMINASE"/>
    <property type="match status" value="1"/>
</dbReference>
<dbReference type="Pfam" id="PF00155">
    <property type="entry name" value="Aminotran_1_2"/>
    <property type="match status" value="1"/>
</dbReference>
<dbReference type="SUPFAM" id="SSF53383">
    <property type="entry name" value="PLP-dependent transferases"/>
    <property type="match status" value="1"/>
</dbReference>
<organism>
    <name type="scientific">Arabidopsis thaliana</name>
    <name type="common">Mouse-ear cress</name>
    <dbReference type="NCBI Taxonomy" id="3702"/>
    <lineage>
        <taxon>Eukaryota</taxon>
        <taxon>Viridiplantae</taxon>
        <taxon>Streptophyta</taxon>
        <taxon>Embryophyta</taxon>
        <taxon>Tracheophyta</taxon>
        <taxon>Spermatophyta</taxon>
        <taxon>Magnoliopsida</taxon>
        <taxon>eudicotyledons</taxon>
        <taxon>Gunneridae</taxon>
        <taxon>Pentapetalae</taxon>
        <taxon>rosids</taxon>
        <taxon>malvids</taxon>
        <taxon>Brassicales</taxon>
        <taxon>Brassicaceae</taxon>
        <taxon>Camelineae</taxon>
        <taxon>Arabidopsis</taxon>
    </lineage>
</organism>
<evidence type="ECO:0000250" key="1"/>
<evidence type="ECO:0000250" key="2">
    <source>
        <dbReference type="UniProtKB" id="Q93ZN9"/>
    </source>
</evidence>
<evidence type="ECO:0000256" key="3">
    <source>
        <dbReference type="SAM" id="MobiDB-lite"/>
    </source>
</evidence>
<evidence type="ECO:0000269" key="4">
    <source>
    </source>
</evidence>
<evidence type="ECO:0000269" key="5">
    <source>
    </source>
</evidence>
<evidence type="ECO:0000269" key="6">
    <source>
    </source>
</evidence>
<evidence type="ECO:0000303" key="7">
    <source>
    </source>
</evidence>
<evidence type="ECO:0000303" key="8">
    <source>
    </source>
</evidence>
<evidence type="ECO:0000305" key="9"/>
<evidence type="ECO:0000312" key="10">
    <source>
        <dbReference type="Araport" id="AT1G17290"/>
    </source>
</evidence>
<evidence type="ECO:0000312" key="11">
    <source>
        <dbReference type="EMBL" id="AAF79891.1"/>
    </source>
</evidence>
<evidence type="ECO:0007744" key="12">
    <source>
    </source>
</evidence>
<proteinExistence type="evidence at protein level"/>
<sequence length="543" mass="59821">MRRFVIGQAKNLIDQSRRRQLHHHKNLSFVSLIPPFSAPSDSSSRHLSSSSSSDMSASDSSSSLPVTLDTINPKVIKCEYAVRGEIVNIAQKLQEDLKTNKDAYPFDEIIYCNIGNPQSLGQQPITFFREVLALCSYTALLDESATHGLFSSDSIERAWKILDQIPGRATGAYSHSQGIKGLRDAIADGIEARDGFPADPNDIFMTDGASPGVHMMMQLLITSEKDGILCPIPQYPLYSASIALHGGTLVPYYLDEASGWGLEISELKKQLEDARSKGITVRALAVINPGNPTGQVLSEENQRDVVKFCKQEGLVLLADEVYQENVYVPDKKFHSFKKVARSMGYGEKDLALVSFQSVSKGYYGECGKRGGYMEVTGFTSDVREQIYKMASVNLCSNISGQILASLIMSPPKPGDDSYESYIAEKDGILSSLARRAKTLEEALNKLEGVTCNRAEGAMYLFPCLHLPQKAIAAAEAEKTAPDNFYCKRLLKATGIVVVPGSGFRQVPGTWHFRCTILPQEDKIPAIVDRLTAFHQSFMDEFRD</sequence>
<gene>
    <name evidence="8" type="primary">ALAAT1</name>
    <name evidence="7" type="synonym">AOAT4</name>
    <name evidence="10" type="ordered locus">At1g17290</name>
    <name evidence="11" type="ORF">T13M22.3</name>
</gene>
<accession>F4I7I0</accession>
<accession>Q56Z96</accession>
<accession>Q94BP8</accession>
<accession>Q9LKJ4</accession>
<accession>Q9LN15</accession>
<keyword id="KW-0007">Acetylation</keyword>
<keyword id="KW-0032">Aminotransferase</keyword>
<keyword id="KW-0496">Mitochondrion</keyword>
<keyword id="KW-0663">Pyridoxal phosphate</keyword>
<keyword id="KW-1185">Reference proteome</keyword>
<keyword id="KW-0808">Transferase</keyword>
<keyword id="KW-0809">Transit peptide</keyword>
<reference key="1">
    <citation type="submission" date="2000-06" db="EMBL/GenBank/DDBJ databases">
        <title>Cloning and characterization of Arabidopsis alanine aminotransferase genes.</title>
        <authorList>
            <person name="Ismond K.P."/>
            <person name="Dennis E.S."/>
            <person name="Dolferus R."/>
        </authorList>
    </citation>
    <scope>NUCLEOTIDE SEQUENCE [MRNA]</scope>
    <source>
        <strain>cv. C24</strain>
    </source>
</reference>
<reference key="2">
    <citation type="journal article" date="2000" name="Nature">
        <title>Sequence and analysis of chromosome 1 of the plant Arabidopsis thaliana.</title>
        <authorList>
            <person name="Theologis A."/>
            <person name="Ecker J.R."/>
            <person name="Palm C.J."/>
            <person name="Federspiel N.A."/>
            <person name="Kaul S."/>
            <person name="White O."/>
            <person name="Alonso J."/>
            <person name="Altafi H."/>
            <person name="Araujo R."/>
            <person name="Bowman C.L."/>
            <person name="Brooks S.Y."/>
            <person name="Buehler E."/>
            <person name="Chan A."/>
            <person name="Chao Q."/>
            <person name="Chen H."/>
            <person name="Cheuk R.F."/>
            <person name="Chin C.W."/>
            <person name="Chung M.K."/>
            <person name="Conn L."/>
            <person name="Conway A.B."/>
            <person name="Conway A.R."/>
            <person name="Creasy T.H."/>
            <person name="Dewar K."/>
            <person name="Dunn P."/>
            <person name="Etgu P."/>
            <person name="Feldblyum T.V."/>
            <person name="Feng J.-D."/>
            <person name="Fong B."/>
            <person name="Fujii C.Y."/>
            <person name="Gill J.E."/>
            <person name="Goldsmith A.D."/>
            <person name="Haas B."/>
            <person name="Hansen N.F."/>
            <person name="Hughes B."/>
            <person name="Huizar L."/>
            <person name="Hunter J.L."/>
            <person name="Jenkins J."/>
            <person name="Johnson-Hopson C."/>
            <person name="Khan S."/>
            <person name="Khaykin E."/>
            <person name="Kim C.J."/>
            <person name="Koo H.L."/>
            <person name="Kremenetskaia I."/>
            <person name="Kurtz D.B."/>
            <person name="Kwan A."/>
            <person name="Lam B."/>
            <person name="Langin-Hooper S."/>
            <person name="Lee A."/>
            <person name="Lee J.M."/>
            <person name="Lenz C.A."/>
            <person name="Li J.H."/>
            <person name="Li Y.-P."/>
            <person name="Lin X."/>
            <person name="Liu S.X."/>
            <person name="Liu Z.A."/>
            <person name="Luros J.S."/>
            <person name="Maiti R."/>
            <person name="Marziali A."/>
            <person name="Militscher J."/>
            <person name="Miranda M."/>
            <person name="Nguyen M."/>
            <person name="Nierman W.C."/>
            <person name="Osborne B.I."/>
            <person name="Pai G."/>
            <person name="Peterson J."/>
            <person name="Pham P.K."/>
            <person name="Rizzo M."/>
            <person name="Rooney T."/>
            <person name="Rowley D."/>
            <person name="Sakano H."/>
            <person name="Salzberg S.L."/>
            <person name="Schwartz J.R."/>
            <person name="Shinn P."/>
            <person name="Southwick A.M."/>
            <person name="Sun H."/>
            <person name="Tallon L.J."/>
            <person name="Tambunga G."/>
            <person name="Toriumi M.J."/>
            <person name="Town C.D."/>
            <person name="Utterback T."/>
            <person name="Van Aken S."/>
            <person name="Vaysberg M."/>
            <person name="Vysotskaia V.S."/>
            <person name="Walker M."/>
            <person name="Wu D."/>
            <person name="Yu G."/>
            <person name="Fraser C.M."/>
            <person name="Venter J.C."/>
            <person name="Davis R.W."/>
        </authorList>
    </citation>
    <scope>NUCLEOTIDE SEQUENCE [LARGE SCALE GENOMIC DNA] OF 75-543</scope>
    <source>
        <strain>cv. Columbia</strain>
    </source>
</reference>
<reference key="3">
    <citation type="journal article" date="2017" name="Plant J.">
        <title>Araport11: a complete reannotation of the Arabidopsis thaliana reference genome.</title>
        <authorList>
            <person name="Cheng C.Y."/>
            <person name="Krishnakumar V."/>
            <person name="Chan A.P."/>
            <person name="Thibaud-Nissen F."/>
            <person name="Schobel S."/>
            <person name="Town C.D."/>
        </authorList>
    </citation>
    <scope>GENOME REANNOTATION</scope>
    <source>
        <strain>cv. Columbia</strain>
    </source>
</reference>
<reference key="4">
    <citation type="journal article" date="2003" name="Science">
        <title>Empirical analysis of transcriptional activity in the Arabidopsis genome.</title>
        <authorList>
            <person name="Yamada K."/>
            <person name="Lim J."/>
            <person name="Dale J.M."/>
            <person name="Chen H."/>
            <person name="Shinn P."/>
            <person name="Palm C.J."/>
            <person name="Southwick A.M."/>
            <person name="Wu H.C."/>
            <person name="Kim C.J."/>
            <person name="Nguyen M."/>
            <person name="Pham P.K."/>
            <person name="Cheuk R.F."/>
            <person name="Karlin-Newmann G."/>
            <person name="Liu S.X."/>
            <person name="Lam B."/>
            <person name="Sakano H."/>
            <person name="Wu T."/>
            <person name="Yu G."/>
            <person name="Miranda M."/>
            <person name="Quach H.L."/>
            <person name="Tripp M."/>
            <person name="Chang C.H."/>
            <person name="Lee J.M."/>
            <person name="Toriumi M.J."/>
            <person name="Chan M.M."/>
            <person name="Tang C.C."/>
            <person name="Onodera C.S."/>
            <person name="Deng J.M."/>
            <person name="Akiyama K."/>
            <person name="Ansari Y."/>
            <person name="Arakawa T."/>
            <person name="Banh J."/>
            <person name="Banno F."/>
            <person name="Bowser L."/>
            <person name="Brooks S.Y."/>
            <person name="Carninci P."/>
            <person name="Chao Q."/>
            <person name="Choy N."/>
            <person name="Enju A."/>
            <person name="Goldsmith A.D."/>
            <person name="Gurjal M."/>
            <person name="Hansen N.F."/>
            <person name="Hayashizaki Y."/>
            <person name="Johnson-Hopson C."/>
            <person name="Hsuan V.W."/>
            <person name="Iida K."/>
            <person name="Karnes M."/>
            <person name="Khan S."/>
            <person name="Koesema E."/>
            <person name="Ishida J."/>
            <person name="Jiang P.X."/>
            <person name="Jones T."/>
            <person name="Kawai J."/>
            <person name="Kamiya A."/>
            <person name="Meyers C."/>
            <person name="Nakajima M."/>
            <person name="Narusaka M."/>
            <person name="Seki M."/>
            <person name="Sakurai T."/>
            <person name="Satou M."/>
            <person name="Tamse R."/>
            <person name="Vaysberg M."/>
            <person name="Wallender E.K."/>
            <person name="Wong C."/>
            <person name="Yamamura Y."/>
            <person name="Yuan S."/>
            <person name="Shinozaki K."/>
            <person name="Davis R.W."/>
            <person name="Theologis A."/>
            <person name="Ecker J.R."/>
        </authorList>
    </citation>
    <scope>NUCLEOTIDE SEQUENCE [LARGE SCALE MRNA] OF 3-543</scope>
    <source>
        <strain>cv. Columbia</strain>
    </source>
</reference>
<reference key="5">
    <citation type="submission" date="2005-03" db="EMBL/GenBank/DDBJ databases">
        <title>Large-scale analysis of RIKEN Arabidopsis full-length (RAFL) cDNAs.</title>
        <authorList>
            <person name="Totoki Y."/>
            <person name="Seki M."/>
            <person name="Ishida J."/>
            <person name="Nakajima M."/>
            <person name="Enju A."/>
            <person name="Kamiya A."/>
            <person name="Narusaka M."/>
            <person name="Shin-i T."/>
            <person name="Nakagawa M."/>
            <person name="Sakamoto N."/>
            <person name="Oishi K."/>
            <person name="Kohara Y."/>
            <person name="Kobayashi M."/>
            <person name="Toyoda A."/>
            <person name="Sakaki Y."/>
            <person name="Sakurai T."/>
            <person name="Iida K."/>
            <person name="Akiyama K."/>
            <person name="Satou M."/>
            <person name="Toyoda T."/>
            <person name="Konagaya A."/>
            <person name="Carninci P."/>
            <person name="Kawai J."/>
            <person name="Hayashizaki Y."/>
            <person name="Shinozaki K."/>
        </authorList>
    </citation>
    <scope>NUCLEOTIDE SEQUENCE [LARGE SCALE MRNA] OF 448-543</scope>
    <source>
        <strain>cv. Columbia</strain>
    </source>
</reference>
<reference key="6">
    <citation type="journal article" date="2003" name="Plant J.">
        <title>Identification of photorespiratory glutamate:glyoxylate aminotransferase (GGAT) gene in Arabidopsis.</title>
        <authorList>
            <person name="Igarashi D."/>
            <person name="Miwa T."/>
            <person name="Seki M."/>
            <person name="Kobayashi M."/>
            <person name="Kato T."/>
            <person name="Tabata S."/>
            <person name="Shinozaki K."/>
            <person name="Ohsumi C."/>
        </authorList>
    </citation>
    <scope>TISSUE SPECIFICITY</scope>
    <scope>GENE FAMILY</scope>
    <scope>NOMENCLATURE</scope>
</reference>
<reference key="7">
    <citation type="journal article" date="2004" name="Plant Cell">
        <title>Experimental analysis of the Arabidopsis mitochondrial proteome highlights signaling and regulatory components, provides assessment of targeting prediction programs, and indicates plant-specific mitochondrial proteins.</title>
        <authorList>
            <person name="Heazlewood J.L."/>
            <person name="Tonti-Filippini J.S."/>
            <person name="Gout A.M."/>
            <person name="Day D.A."/>
            <person name="Whelan J."/>
            <person name="Millar A.H."/>
        </authorList>
    </citation>
    <scope>IDENTIFICATION BY MASS SPECTROMETRY</scope>
    <scope>SUBCELLULAR LOCATION [LARGE SCALE ANALYSIS]</scope>
    <source>
        <strain>cv. Landsberg erecta</strain>
    </source>
</reference>
<reference key="8">
    <citation type="journal article" date="2007" name="Plant J.">
        <title>Alanine aminotransferase catalyses the breakdown of alanine after hypoxia in Arabidopsis thaliana.</title>
        <authorList>
            <person name="Miyashita Y."/>
            <person name="Dolferus R."/>
            <person name="Ismond K.P."/>
            <person name="Good A.G."/>
        </authorList>
    </citation>
    <scope>FUNCTION</scope>
    <scope>CATALYTIC ACTIVITY</scope>
    <scope>TISSUE SPECIFICITY</scope>
    <scope>INDUCTION BY HYPOXIC STRESS</scope>
    <scope>DISRUPTION PHENOTYPE</scope>
</reference>
<reference key="9">
    <citation type="journal article" date="2012" name="Mol. Cell. Proteomics">
        <title>Comparative large-scale characterisation of plant vs. mammal proteins reveals similar and idiosyncratic N-alpha acetylation features.</title>
        <authorList>
            <person name="Bienvenut W.V."/>
            <person name="Sumpton D."/>
            <person name="Martinez A."/>
            <person name="Lilla S."/>
            <person name="Espagne C."/>
            <person name="Meinnel T."/>
            <person name="Giglione C."/>
        </authorList>
    </citation>
    <scope>ACETYLATION [LARGE SCALE ANALYSIS] AT SER-56</scope>
    <scope>CLEAVAGE OF TRANSIT PEPTIDE [LARGE SCALE ANALYSIS] AFTER MET-55</scope>
    <scope>IDENTIFICATION BY MASS SPECTROMETRY [LARGE SCALE ANALYSIS]</scope>
</reference>
<comment type="function">
    <text evidence="6">Is the major alanine aminotransferase in roots that catalyzes the conversion of alanine to pyruvate (PubMed:17319845). Involved in the rapid conversion of alanine to pyruvate during recovery from low-oxygen stress (PubMed:17319845).</text>
</comment>
<comment type="catalytic activity">
    <reaction evidence="6">
        <text>L-alanine + 2-oxoglutarate = pyruvate + L-glutamate</text>
        <dbReference type="Rhea" id="RHEA:19453"/>
        <dbReference type="ChEBI" id="CHEBI:15361"/>
        <dbReference type="ChEBI" id="CHEBI:16810"/>
        <dbReference type="ChEBI" id="CHEBI:29985"/>
        <dbReference type="ChEBI" id="CHEBI:57972"/>
        <dbReference type="EC" id="2.6.1.2"/>
    </reaction>
    <physiologicalReaction direction="left-to-right" evidence="6">
        <dbReference type="Rhea" id="RHEA:19454"/>
    </physiologicalReaction>
</comment>
<comment type="cofactor">
    <cofactor evidence="2">
        <name>pyridoxal 5'-phosphate</name>
        <dbReference type="ChEBI" id="CHEBI:597326"/>
    </cofactor>
</comment>
<comment type="pathway">
    <text evidence="9">Photosynthesis; C4 acid pathway.</text>
</comment>
<comment type="pathway">
    <text evidence="9">Amino-acid degradation; L-alanine degradation via transaminase pathway; pyruvate from L-alanine: step 1/1.</text>
</comment>
<comment type="subunit">
    <text evidence="2">Homodimer.</text>
</comment>
<comment type="subcellular location">
    <subcellularLocation>
        <location evidence="5">Mitochondrion</location>
    </subcellularLocation>
</comment>
<comment type="tissue specificity">
    <text evidence="4 6">Mostly expressed in roots and shoots, mostly in vascular tissues, and, to a lower extent, in flowers and leaves.</text>
</comment>
<comment type="induction">
    <text evidence="6">Rapidly induced upon low-oxygen stress in roots and shoots.</text>
</comment>
<comment type="PTM">
    <text evidence="1">The N-terminus is blocked.</text>
</comment>
<comment type="disruption phenotype">
    <text evidence="6">Strong overall decrease of alanine aminotransferase activity, especially in roots.</text>
</comment>
<comment type="similarity">
    <text evidence="9">Belongs to the class-I pyridoxal-phosphate-dependent aminotransferase family. Alanine aminotransferase subfamily.</text>
</comment>
<comment type="sequence caution" evidence="9">
    <conflict type="erroneous initiation">
        <sequence resource="EMBL-CDS" id="BAD94892"/>
    </conflict>
    <text>Truncated N-terminus.</text>
</comment>
<name>ALAT1_ARATH</name>
<feature type="transit peptide" description="Mitochondrion" evidence="12">
    <location>
        <begin position="1"/>
        <end position="55"/>
    </location>
</feature>
<feature type="chain" id="PRO_0000416042" description="Alanine aminotransferase 1, mitochondrial">
    <location>
        <begin position="56"/>
        <end position="543"/>
    </location>
</feature>
<feature type="region of interest" description="Disordered" evidence="3">
    <location>
        <begin position="43"/>
        <end position="64"/>
    </location>
</feature>
<feature type="compositionally biased region" description="Low complexity" evidence="3">
    <location>
        <begin position="43"/>
        <end position="63"/>
    </location>
</feature>
<feature type="binding site" evidence="2">
    <location>
        <position position="173"/>
    </location>
    <ligand>
        <name>pyridoxal 5'-phosphate</name>
        <dbReference type="ChEBI" id="CHEBI:597326"/>
    </ligand>
</feature>
<feature type="binding site" evidence="2">
    <location>
        <begin position="209"/>
        <end position="210"/>
    </location>
    <ligand>
        <name>pyridoxal 5'-phosphate</name>
        <dbReference type="ChEBI" id="CHEBI:597326"/>
    </ligand>
</feature>
<feature type="binding site" evidence="2">
    <location>
        <position position="235"/>
    </location>
    <ligand>
        <name>pyridoxal 5'-phosphate</name>
        <dbReference type="ChEBI" id="CHEBI:597326"/>
    </ligand>
</feature>
<feature type="binding site" evidence="2">
    <location>
        <position position="291"/>
    </location>
    <ligand>
        <name>pyridoxal 5'-phosphate</name>
        <dbReference type="ChEBI" id="CHEBI:597326"/>
    </ligand>
</feature>
<feature type="binding site" evidence="2">
    <location>
        <position position="322"/>
    </location>
    <ligand>
        <name>pyridoxal 5'-phosphate</name>
        <dbReference type="ChEBI" id="CHEBI:597326"/>
    </ligand>
</feature>
<feature type="binding site" evidence="2">
    <location>
        <begin position="354"/>
        <end position="356"/>
    </location>
    <ligand>
        <name>pyridoxal 5'-phosphate</name>
        <dbReference type="ChEBI" id="CHEBI:597326"/>
    </ligand>
</feature>
<feature type="binding site" evidence="2">
    <location>
        <position position="369"/>
    </location>
    <ligand>
        <name>pyridoxal 5'-phosphate</name>
        <dbReference type="ChEBI" id="CHEBI:597326"/>
    </ligand>
</feature>
<feature type="binding site" evidence="2">
    <location>
        <position position="397"/>
    </location>
    <ligand>
        <name>pyridoxal 5'-phosphate</name>
        <dbReference type="ChEBI" id="CHEBI:597326"/>
    </ligand>
</feature>
<feature type="modified residue" description="N-acetylserine" evidence="12">
    <location>
        <position position="56"/>
    </location>
</feature>
<feature type="modified residue" description="N6-(pyridoxal phosphate)lysine" evidence="2">
    <location>
        <position position="360"/>
    </location>
</feature>
<feature type="sequence conflict" description="In Ref. 1; AAF82782." evidence="9" ref="1">
    <original>K</original>
    <variation>N</variation>
    <location>
        <position position="307"/>
    </location>
</feature>